<accession>A9MDK1</accession>
<dbReference type="EC" id="1.14.-.-" evidence="1"/>
<dbReference type="EMBL" id="CP000873">
    <property type="protein sequence ID" value="ABX63289.1"/>
    <property type="molecule type" value="Genomic_DNA"/>
</dbReference>
<dbReference type="RefSeq" id="WP_004689973.1">
    <property type="nucleotide sequence ID" value="NC_010104.1"/>
</dbReference>
<dbReference type="SMR" id="A9MDK1"/>
<dbReference type="GeneID" id="55591823"/>
<dbReference type="KEGG" id="bcs:BCAN_B0089"/>
<dbReference type="HOGENOM" id="CLU_038878_0_0_5"/>
<dbReference type="PhylomeDB" id="A9MDK1"/>
<dbReference type="Proteomes" id="UP000001385">
    <property type="component" value="Chromosome II"/>
</dbReference>
<dbReference type="GO" id="GO:0016705">
    <property type="term" value="F:oxidoreductase activity, acting on paired donors, with incorporation or reduction of molecular oxygen"/>
    <property type="evidence" value="ECO:0007669"/>
    <property type="project" value="UniProtKB-UniRule"/>
</dbReference>
<dbReference type="GO" id="GO:0006400">
    <property type="term" value="P:tRNA modification"/>
    <property type="evidence" value="ECO:0007669"/>
    <property type="project" value="UniProtKB-UniRule"/>
</dbReference>
<dbReference type="CDD" id="cd01518">
    <property type="entry name" value="RHOD_YceA"/>
    <property type="match status" value="1"/>
</dbReference>
<dbReference type="Gene3D" id="3.30.70.100">
    <property type="match status" value="1"/>
</dbReference>
<dbReference type="Gene3D" id="3.40.250.10">
    <property type="entry name" value="Rhodanese-like domain"/>
    <property type="match status" value="1"/>
</dbReference>
<dbReference type="HAMAP" id="MF_00469">
    <property type="entry name" value="TrhO"/>
    <property type="match status" value="1"/>
</dbReference>
<dbReference type="InterPro" id="IPR001763">
    <property type="entry name" value="Rhodanese-like_dom"/>
</dbReference>
<dbReference type="InterPro" id="IPR036873">
    <property type="entry name" value="Rhodanese-like_dom_sf"/>
</dbReference>
<dbReference type="InterPro" id="IPR020936">
    <property type="entry name" value="TrhO"/>
</dbReference>
<dbReference type="InterPro" id="IPR040503">
    <property type="entry name" value="TRHO_N"/>
</dbReference>
<dbReference type="NCBIfam" id="NF001136">
    <property type="entry name" value="PRK00142.1-4"/>
    <property type="match status" value="1"/>
</dbReference>
<dbReference type="PANTHER" id="PTHR43268:SF3">
    <property type="entry name" value="RHODANESE-LIKE DOMAIN-CONTAINING PROTEIN 7-RELATED"/>
    <property type="match status" value="1"/>
</dbReference>
<dbReference type="PANTHER" id="PTHR43268">
    <property type="entry name" value="THIOSULFATE SULFURTRANSFERASE/RHODANESE-LIKE DOMAIN-CONTAINING PROTEIN 2"/>
    <property type="match status" value="1"/>
</dbReference>
<dbReference type="Pfam" id="PF00581">
    <property type="entry name" value="Rhodanese"/>
    <property type="match status" value="1"/>
</dbReference>
<dbReference type="Pfam" id="PF17773">
    <property type="entry name" value="UPF0176_N"/>
    <property type="match status" value="1"/>
</dbReference>
<dbReference type="SMART" id="SM00450">
    <property type="entry name" value="RHOD"/>
    <property type="match status" value="1"/>
</dbReference>
<dbReference type="SUPFAM" id="SSF52821">
    <property type="entry name" value="Rhodanese/Cell cycle control phosphatase"/>
    <property type="match status" value="1"/>
</dbReference>
<dbReference type="PROSITE" id="PS50206">
    <property type="entry name" value="RHODANESE_3"/>
    <property type="match status" value="1"/>
</dbReference>
<comment type="function">
    <text evidence="1">Catalyzes oxygen-dependent 5-hydroxyuridine (ho5U) modification at position 34 in tRNAs.</text>
</comment>
<comment type="catalytic activity">
    <reaction evidence="1">
        <text>uridine(34) in tRNA + AH2 + O2 = 5-hydroxyuridine(34) in tRNA + A + H2O</text>
        <dbReference type="Rhea" id="RHEA:64224"/>
        <dbReference type="Rhea" id="RHEA-COMP:11727"/>
        <dbReference type="Rhea" id="RHEA-COMP:13381"/>
        <dbReference type="ChEBI" id="CHEBI:13193"/>
        <dbReference type="ChEBI" id="CHEBI:15377"/>
        <dbReference type="ChEBI" id="CHEBI:15379"/>
        <dbReference type="ChEBI" id="CHEBI:17499"/>
        <dbReference type="ChEBI" id="CHEBI:65315"/>
        <dbReference type="ChEBI" id="CHEBI:136877"/>
    </reaction>
</comment>
<comment type="similarity">
    <text evidence="1">Belongs to the TrhO family.</text>
</comment>
<feature type="chain" id="PRO_1000081185" description="tRNA uridine(34) hydroxylase">
    <location>
        <begin position="1"/>
        <end position="305"/>
    </location>
</feature>
<feature type="domain" description="Rhodanese" evidence="1">
    <location>
        <begin position="125"/>
        <end position="219"/>
    </location>
</feature>
<feature type="active site" description="Cysteine persulfide intermediate" evidence="1">
    <location>
        <position position="179"/>
    </location>
</feature>
<reference key="1">
    <citation type="submission" date="2007-10" db="EMBL/GenBank/DDBJ databases">
        <title>Brucella canis ATCC 23365 whole genome shotgun sequencing project.</title>
        <authorList>
            <person name="Setubal J.C."/>
            <person name="Bowns C."/>
            <person name="Boyle S."/>
            <person name="Crasta O.R."/>
            <person name="Czar M.J."/>
            <person name="Dharmanolla C."/>
            <person name="Gillespie J.J."/>
            <person name="Kenyon R.W."/>
            <person name="Lu J."/>
            <person name="Mane S."/>
            <person name="Mohapatra S."/>
            <person name="Nagrani S."/>
            <person name="Purkayastha A."/>
            <person name="Rajasimha H.K."/>
            <person name="Shallom J.M."/>
            <person name="Shallom S."/>
            <person name="Shukla M."/>
            <person name="Snyder E.E."/>
            <person name="Sobral B.W."/>
            <person name="Wattam A.R."/>
            <person name="Will R."/>
            <person name="Williams K."/>
            <person name="Yoo H."/>
            <person name="Bruce D."/>
            <person name="Detter C."/>
            <person name="Munk C."/>
            <person name="Brettin T.S."/>
        </authorList>
    </citation>
    <scope>NUCLEOTIDE SEQUENCE [LARGE SCALE GENOMIC DNA]</scope>
    <source>
        <strain>ATCC 23365 / NCTC 10854 / RM-666</strain>
    </source>
</reference>
<organism>
    <name type="scientific">Brucella canis (strain ATCC 23365 / NCTC 10854 / RM-666)</name>
    <dbReference type="NCBI Taxonomy" id="483179"/>
    <lineage>
        <taxon>Bacteria</taxon>
        <taxon>Pseudomonadati</taxon>
        <taxon>Pseudomonadota</taxon>
        <taxon>Alphaproteobacteria</taxon>
        <taxon>Hyphomicrobiales</taxon>
        <taxon>Brucellaceae</taxon>
        <taxon>Brucella/Ochrobactrum group</taxon>
        <taxon>Brucella</taxon>
    </lineage>
</organism>
<keyword id="KW-0560">Oxidoreductase</keyword>
<keyword id="KW-1185">Reference proteome</keyword>
<keyword id="KW-0819">tRNA processing</keyword>
<sequence>MSNLPFTVAALYCFAPLPQYESLREPLAQLCCANGIKGTLLLAAEGINGTVAGSAGAIEKLIAHITAIPGLGEPELKYSHASEMPFHRMKVRLKREIVTMGVEGIDPLKSVGTYIAPKDWNALIADENTVVVDTRNDYEYAIGTFEGAIDPQTRTFREFPEWVKQNRDRLEGKKIAMFCTGGIRCEKATAFVKGLGFDDVYHLKGGILKYLEEVPREQSVWNGECFVFDERVAVGHGLAESDVELCRACRRPLTPQDKLSQFFEEGVSCAGCYAERTPEDRARYAERQKQVKLAEKRGANKHIGS</sequence>
<gene>
    <name evidence="1" type="primary">trhO</name>
    <name type="ordered locus">BCAN_B0089</name>
</gene>
<name>TRHO_BRUC2</name>
<proteinExistence type="inferred from homology"/>
<evidence type="ECO:0000255" key="1">
    <source>
        <dbReference type="HAMAP-Rule" id="MF_00469"/>
    </source>
</evidence>
<protein>
    <recommendedName>
        <fullName evidence="1">tRNA uridine(34) hydroxylase</fullName>
        <ecNumber evidence="1">1.14.-.-</ecNumber>
    </recommendedName>
    <alternativeName>
        <fullName evidence="1">tRNA hydroxylation protein O</fullName>
    </alternativeName>
</protein>